<comment type="induction">
    <text evidence="2">Highly repressed by CodY.</text>
</comment>
<comment type="similarity">
    <text evidence="3">Belongs to the ABC transporter superfamily.</text>
</comment>
<organism>
    <name type="scientific">Bacillus subtilis (strain 168)</name>
    <dbReference type="NCBI Taxonomy" id="224308"/>
    <lineage>
        <taxon>Bacteria</taxon>
        <taxon>Bacillati</taxon>
        <taxon>Bacillota</taxon>
        <taxon>Bacilli</taxon>
        <taxon>Bacillales</taxon>
        <taxon>Bacillaceae</taxon>
        <taxon>Bacillus</taxon>
    </lineage>
</organism>
<protein>
    <recommendedName>
        <fullName>Uncharacterized ABC transporter ATP-binding protein YlmA</fullName>
        <ecNumber>7.-.-.-</ecNumber>
    </recommendedName>
</protein>
<evidence type="ECO:0000255" key="1">
    <source>
        <dbReference type="PROSITE-ProRule" id="PRU00434"/>
    </source>
</evidence>
<evidence type="ECO:0000269" key="2">
    <source>
    </source>
</evidence>
<evidence type="ECO:0000305" key="3"/>
<sequence>MILQLDNVSLKRNGKWILKDIHWKVEEKENWVLYGLNGAGKTALLNMLCSYYFPTSGEMQVLGHEFGKTELGEKLRRKIGLVSAALQQKLYPADSAFEIALSGAYASIGLYETPSKETREKAIGLLEDLGAIEYADRRYETLSQGEKQRALIARALMADPELLILDEPVTGLDFIAREKLLDTITYIANKENAPSILYVTHHAEEILPVFDKALLLKQGEVFGSGEIKEMLTDQILSAFFDTPIHVLWNQDRPFLTRAEPITNA</sequence>
<accession>O31723</accession>
<gene>
    <name type="primary">ylmA</name>
    <name type="ordered locus">BSU15340</name>
</gene>
<proteinExistence type="evidence at transcript level"/>
<keyword id="KW-0067">ATP-binding</keyword>
<keyword id="KW-0547">Nucleotide-binding</keyword>
<keyword id="KW-1185">Reference proteome</keyword>
<keyword id="KW-1278">Translocase</keyword>
<keyword id="KW-0813">Transport</keyword>
<name>YLMA_BACSU</name>
<dbReference type="EC" id="7.-.-.-"/>
<dbReference type="EMBL" id="AL009126">
    <property type="protein sequence ID" value="CAB13408.2"/>
    <property type="molecule type" value="Genomic_DNA"/>
</dbReference>
<dbReference type="PIR" id="A69876">
    <property type="entry name" value="A69876"/>
</dbReference>
<dbReference type="RefSeq" id="NP_389417.2">
    <property type="nucleotide sequence ID" value="NC_000964.3"/>
</dbReference>
<dbReference type="RefSeq" id="WP_003232156.1">
    <property type="nucleotide sequence ID" value="NZ_OZ025638.1"/>
</dbReference>
<dbReference type="SMR" id="O31723"/>
<dbReference type="FunCoup" id="O31723">
    <property type="interactions" value="35"/>
</dbReference>
<dbReference type="STRING" id="224308.BSU15340"/>
<dbReference type="PaxDb" id="224308-BSU15340"/>
<dbReference type="EnsemblBacteria" id="CAB13408">
    <property type="protein sequence ID" value="CAB13408"/>
    <property type="gene ID" value="BSU_15340"/>
</dbReference>
<dbReference type="GeneID" id="940012"/>
<dbReference type="KEGG" id="bsu:BSU15340"/>
<dbReference type="PATRIC" id="fig|224308.179.peg.1672"/>
<dbReference type="eggNOG" id="COG1119">
    <property type="taxonomic scope" value="Bacteria"/>
</dbReference>
<dbReference type="InParanoid" id="O31723"/>
<dbReference type="OrthoDB" id="9789994at2"/>
<dbReference type="PhylomeDB" id="O31723"/>
<dbReference type="BioCyc" id="BSUB:BSU15340-MONOMER"/>
<dbReference type="Proteomes" id="UP000001570">
    <property type="component" value="Chromosome"/>
</dbReference>
<dbReference type="GO" id="GO:0043190">
    <property type="term" value="C:ATP-binding cassette (ABC) transporter complex"/>
    <property type="evidence" value="ECO:0000318"/>
    <property type="project" value="GO_Central"/>
</dbReference>
<dbReference type="GO" id="GO:0005524">
    <property type="term" value="F:ATP binding"/>
    <property type="evidence" value="ECO:0000318"/>
    <property type="project" value="GO_Central"/>
</dbReference>
<dbReference type="GO" id="GO:0016887">
    <property type="term" value="F:ATP hydrolysis activity"/>
    <property type="evidence" value="ECO:0007669"/>
    <property type="project" value="InterPro"/>
</dbReference>
<dbReference type="GO" id="GO:0042626">
    <property type="term" value="F:ATPase-coupled transmembrane transporter activity"/>
    <property type="evidence" value="ECO:0000318"/>
    <property type="project" value="GO_Central"/>
</dbReference>
<dbReference type="FunFam" id="3.40.50.300:FF:001031">
    <property type="entry name" value="Iron ABC transporter ATP-binding protein"/>
    <property type="match status" value="1"/>
</dbReference>
<dbReference type="Gene3D" id="3.40.50.300">
    <property type="entry name" value="P-loop containing nucleotide triphosphate hydrolases"/>
    <property type="match status" value="1"/>
</dbReference>
<dbReference type="InterPro" id="IPR003593">
    <property type="entry name" value="AAA+_ATPase"/>
</dbReference>
<dbReference type="InterPro" id="IPR003439">
    <property type="entry name" value="ABC_transporter-like_ATP-bd"/>
</dbReference>
<dbReference type="InterPro" id="IPR017871">
    <property type="entry name" value="ABC_transporter-like_CS"/>
</dbReference>
<dbReference type="InterPro" id="IPR027417">
    <property type="entry name" value="P-loop_NTPase"/>
</dbReference>
<dbReference type="PANTHER" id="PTHR43158">
    <property type="entry name" value="SKFA PEPTIDE EXPORT ATP-BINDING PROTEIN SKFE"/>
    <property type="match status" value="1"/>
</dbReference>
<dbReference type="PANTHER" id="PTHR43158:SF2">
    <property type="entry name" value="SKFA PEPTIDE EXPORT ATP-BINDING PROTEIN SKFE"/>
    <property type="match status" value="1"/>
</dbReference>
<dbReference type="Pfam" id="PF00005">
    <property type="entry name" value="ABC_tran"/>
    <property type="match status" value="1"/>
</dbReference>
<dbReference type="SMART" id="SM00382">
    <property type="entry name" value="AAA"/>
    <property type="match status" value="1"/>
</dbReference>
<dbReference type="SUPFAM" id="SSF52540">
    <property type="entry name" value="P-loop containing nucleoside triphosphate hydrolases"/>
    <property type="match status" value="1"/>
</dbReference>
<dbReference type="PROSITE" id="PS00211">
    <property type="entry name" value="ABC_TRANSPORTER_1"/>
    <property type="match status" value="1"/>
</dbReference>
<dbReference type="PROSITE" id="PS50893">
    <property type="entry name" value="ABC_TRANSPORTER_2"/>
    <property type="match status" value="1"/>
</dbReference>
<feature type="chain" id="PRO_0000361673" description="Uncharacterized ABC transporter ATP-binding protein YlmA">
    <location>
        <begin position="1"/>
        <end position="264"/>
    </location>
</feature>
<feature type="domain" description="ABC transporter" evidence="1">
    <location>
        <begin position="3"/>
        <end position="243"/>
    </location>
</feature>
<feature type="binding site" evidence="1">
    <location>
        <begin position="35"/>
        <end position="42"/>
    </location>
    <ligand>
        <name>ATP</name>
        <dbReference type="ChEBI" id="CHEBI:30616"/>
    </ligand>
</feature>
<reference key="1">
    <citation type="journal article" date="1997" name="Nature">
        <title>The complete genome sequence of the Gram-positive bacterium Bacillus subtilis.</title>
        <authorList>
            <person name="Kunst F."/>
            <person name="Ogasawara N."/>
            <person name="Moszer I."/>
            <person name="Albertini A.M."/>
            <person name="Alloni G."/>
            <person name="Azevedo V."/>
            <person name="Bertero M.G."/>
            <person name="Bessieres P."/>
            <person name="Bolotin A."/>
            <person name="Borchert S."/>
            <person name="Borriss R."/>
            <person name="Boursier L."/>
            <person name="Brans A."/>
            <person name="Braun M."/>
            <person name="Brignell S.C."/>
            <person name="Bron S."/>
            <person name="Brouillet S."/>
            <person name="Bruschi C.V."/>
            <person name="Caldwell B."/>
            <person name="Capuano V."/>
            <person name="Carter N.M."/>
            <person name="Choi S.-K."/>
            <person name="Codani J.-J."/>
            <person name="Connerton I.F."/>
            <person name="Cummings N.J."/>
            <person name="Daniel R.A."/>
            <person name="Denizot F."/>
            <person name="Devine K.M."/>
            <person name="Duesterhoeft A."/>
            <person name="Ehrlich S.D."/>
            <person name="Emmerson P.T."/>
            <person name="Entian K.-D."/>
            <person name="Errington J."/>
            <person name="Fabret C."/>
            <person name="Ferrari E."/>
            <person name="Foulger D."/>
            <person name="Fritz C."/>
            <person name="Fujita M."/>
            <person name="Fujita Y."/>
            <person name="Fuma S."/>
            <person name="Galizzi A."/>
            <person name="Galleron N."/>
            <person name="Ghim S.-Y."/>
            <person name="Glaser P."/>
            <person name="Goffeau A."/>
            <person name="Golightly E.J."/>
            <person name="Grandi G."/>
            <person name="Guiseppi G."/>
            <person name="Guy B.J."/>
            <person name="Haga K."/>
            <person name="Haiech J."/>
            <person name="Harwood C.R."/>
            <person name="Henaut A."/>
            <person name="Hilbert H."/>
            <person name="Holsappel S."/>
            <person name="Hosono S."/>
            <person name="Hullo M.-F."/>
            <person name="Itaya M."/>
            <person name="Jones L.-M."/>
            <person name="Joris B."/>
            <person name="Karamata D."/>
            <person name="Kasahara Y."/>
            <person name="Klaerr-Blanchard M."/>
            <person name="Klein C."/>
            <person name="Kobayashi Y."/>
            <person name="Koetter P."/>
            <person name="Koningstein G."/>
            <person name="Krogh S."/>
            <person name="Kumano M."/>
            <person name="Kurita K."/>
            <person name="Lapidus A."/>
            <person name="Lardinois S."/>
            <person name="Lauber J."/>
            <person name="Lazarevic V."/>
            <person name="Lee S.-M."/>
            <person name="Levine A."/>
            <person name="Liu H."/>
            <person name="Masuda S."/>
            <person name="Mauel C."/>
            <person name="Medigue C."/>
            <person name="Medina N."/>
            <person name="Mellado R.P."/>
            <person name="Mizuno M."/>
            <person name="Moestl D."/>
            <person name="Nakai S."/>
            <person name="Noback M."/>
            <person name="Noone D."/>
            <person name="O'Reilly M."/>
            <person name="Ogawa K."/>
            <person name="Ogiwara A."/>
            <person name="Oudega B."/>
            <person name="Park S.-H."/>
            <person name="Parro V."/>
            <person name="Pohl T.M."/>
            <person name="Portetelle D."/>
            <person name="Porwollik S."/>
            <person name="Prescott A.M."/>
            <person name="Presecan E."/>
            <person name="Pujic P."/>
            <person name="Purnelle B."/>
            <person name="Rapoport G."/>
            <person name="Rey M."/>
            <person name="Reynolds S."/>
            <person name="Rieger M."/>
            <person name="Rivolta C."/>
            <person name="Rocha E."/>
            <person name="Roche B."/>
            <person name="Rose M."/>
            <person name="Sadaie Y."/>
            <person name="Sato T."/>
            <person name="Scanlan E."/>
            <person name="Schleich S."/>
            <person name="Schroeter R."/>
            <person name="Scoffone F."/>
            <person name="Sekiguchi J."/>
            <person name="Sekowska A."/>
            <person name="Seror S.J."/>
            <person name="Serror P."/>
            <person name="Shin B.-S."/>
            <person name="Soldo B."/>
            <person name="Sorokin A."/>
            <person name="Tacconi E."/>
            <person name="Takagi T."/>
            <person name="Takahashi H."/>
            <person name="Takemaru K."/>
            <person name="Takeuchi M."/>
            <person name="Tamakoshi A."/>
            <person name="Tanaka T."/>
            <person name="Terpstra P."/>
            <person name="Tognoni A."/>
            <person name="Tosato V."/>
            <person name="Uchiyama S."/>
            <person name="Vandenbol M."/>
            <person name="Vannier F."/>
            <person name="Vassarotti A."/>
            <person name="Viari A."/>
            <person name="Wambutt R."/>
            <person name="Wedler E."/>
            <person name="Wedler H."/>
            <person name="Weitzenegger T."/>
            <person name="Winters P."/>
            <person name="Wipat A."/>
            <person name="Yamamoto H."/>
            <person name="Yamane K."/>
            <person name="Yasumoto K."/>
            <person name="Yata K."/>
            <person name="Yoshida K."/>
            <person name="Yoshikawa H.-F."/>
            <person name="Zumstein E."/>
            <person name="Yoshikawa H."/>
            <person name="Danchin A."/>
        </authorList>
    </citation>
    <scope>NUCLEOTIDE SEQUENCE [LARGE SCALE GENOMIC DNA]</scope>
    <source>
        <strain>168</strain>
    </source>
</reference>
<reference key="2">
    <citation type="journal article" date="2009" name="Microbiology">
        <title>From a consortium sequence to a unified sequence: the Bacillus subtilis 168 reference genome a decade later.</title>
        <authorList>
            <person name="Barbe V."/>
            <person name="Cruveiller S."/>
            <person name="Kunst F."/>
            <person name="Lenoble P."/>
            <person name="Meurice G."/>
            <person name="Sekowska A."/>
            <person name="Vallenet D."/>
            <person name="Wang T."/>
            <person name="Moszer I."/>
            <person name="Medigue C."/>
            <person name="Danchin A."/>
        </authorList>
    </citation>
    <scope>SEQUENCE REVISION TO 60</scope>
</reference>
<reference key="3">
    <citation type="journal article" date="2008" name="J. Bacteriol.">
        <title>Genetic and biochemical analysis of CodY-binding sites in Bacillus subtilis.</title>
        <authorList>
            <person name="Belitsky B.R."/>
            <person name="Sonenshein A.L."/>
        </authorList>
    </citation>
    <scope>INDUCTION</scope>
</reference>